<protein>
    <recommendedName>
        <fullName evidence="1">Octanoyltransferase</fullName>
        <ecNumber evidence="1">2.3.1.181</ecNumber>
    </recommendedName>
    <alternativeName>
        <fullName evidence="1">Lipoate-protein ligase B</fullName>
    </alternativeName>
    <alternativeName>
        <fullName evidence="1">Lipoyl/octanoyl transferase</fullName>
    </alternativeName>
    <alternativeName>
        <fullName evidence="1">Octanoyl-[acyl-carrier-protein]-protein N-octanoyltransferase</fullName>
    </alternativeName>
</protein>
<proteinExistence type="inferred from homology"/>
<keyword id="KW-0012">Acyltransferase</keyword>
<keyword id="KW-0963">Cytoplasm</keyword>
<keyword id="KW-0808">Transferase</keyword>
<dbReference type="EC" id="2.3.1.181" evidence="1"/>
<dbReference type="EMBL" id="BX251411">
    <property type="protein sequence ID" value="CAD66976.1"/>
    <property type="molecule type" value="Genomic_DNA"/>
</dbReference>
<dbReference type="SMR" id="Q83I07"/>
<dbReference type="KEGG" id="tws:TW302"/>
<dbReference type="HOGENOM" id="CLU_035168_2_1_11"/>
<dbReference type="UniPathway" id="UPA00538">
    <property type="reaction ID" value="UER00592"/>
</dbReference>
<dbReference type="GO" id="GO:0005737">
    <property type="term" value="C:cytoplasm"/>
    <property type="evidence" value="ECO:0007669"/>
    <property type="project" value="UniProtKB-SubCell"/>
</dbReference>
<dbReference type="GO" id="GO:0033819">
    <property type="term" value="F:lipoyl(octanoyl) transferase activity"/>
    <property type="evidence" value="ECO:0007669"/>
    <property type="project" value="UniProtKB-EC"/>
</dbReference>
<dbReference type="GO" id="GO:0036211">
    <property type="term" value="P:protein modification process"/>
    <property type="evidence" value="ECO:0007669"/>
    <property type="project" value="InterPro"/>
</dbReference>
<dbReference type="CDD" id="cd16444">
    <property type="entry name" value="LipB"/>
    <property type="match status" value="1"/>
</dbReference>
<dbReference type="Gene3D" id="3.30.930.10">
    <property type="entry name" value="Bira Bifunctional Protein, Domain 2"/>
    <property type="match status" value="1"/>
</dbReference>
<dbReference type="HAMAP" id="MF_00013">
    <property type="entry name" value="LipB"/>
    <property type="match status" value="1"/>
</dbReference>
<dbReference type="InterPro" id="IPR045864">
    <property type="entry name" value="aa-tRNA-synth_II/BPL/LPL"/>
</dbReference>
<dbReference type="InterPro" id="IPR004143">
    <property type="entry name" value="BPL_LPL_catalytic"/>
</dbReference>
<dbReference type="InterPro" id="IPR000544">
    <property type="entry name" value="Octanoyltransferase"/>
</dbReference>
<dbReference type="InterPro" id="IPR020605">
    <property type="entry name" value="Octanoyltransferase_CS"/>
</dbReference>
<dbReference type="NCBIfam" id="TIGR00214">
    <property type="entry name" value="lipB"/>
    <property type="match status" value="1"/>
</dbReference>
<dbReference type="NCBIfam" id="NF010925">
    <property type="entry name" value="PRK14345.1"/>
    <property type="match status" value="1"/>
</dbReference>
<dbReference type="PANTHER" id="PTHR10993:SF7">
    <property type="entry name" value="LIPOYLTRANSFERASE 2, MITOCHONDRIAL-RELATED"/>
    <property type="match status" value="1"/>
</dbReference>
<dbReference type="PANTHER" id="PTHR10993">
    <property type="entry name" value="OCTANOYLTRANSFERASE"/>
    <property type="match status" value="1"/>
</dbReference>
<dbReference type="Pfam" id="PF21948">
    <property type="entry name" value="LplA-B_cat"/>
    <property type="match status" value="1"/>
</dbReference>
<dbReference type="PIRSF" id="PIRSF016262">
    <property type="entry name" value="LPLase"/>
    <property type="match status" value="1"/>
</dbReference>
<dbReference type="SUPFAM" id="SSF55681">
    <property type="entry name" value="Class II aaRS and biotin synthetases"/>
    <property type="match status" value="1"/>
</dbReference>
<dbReference type="PROSITE" id="PS51733">
    <property type="entry name" value="BPL_LPL_CATALYTIC"/>
    <property type="match status" value="1"/>
</dbReference>
<dbReference type="PROSITE" id="PS01313">
    <property type="entry name" value="LIPB"/>
    <property type="match status" value="1"/>
</dbReference>
<evidence type="ECO:0000255" key="1">
    <source>
        <dbReference type="HAMAP-Rule" id="MF_00013"/>
    </source>
</evidence>
<evidence type="ECO:0000255" key="2">
    <source>
        <dbReference type="PROSITE-ProRule" id="PRU01067"/>
    </source>
</evidence>
<sequence length="225" mass="25028">MYSIRVLAIECIRLAPEYLPFEEGWRMQQELHKKITESQTNKNRQASMIFCEHEPVYTAGARTRSWEMPQNEKVIRVGRGGKITWHGPGQLVGYPILSLGATPDVLRYVRQIEEGLINALQSVGINGFRIAGRSGVWVRNGVSDEKVAAIGVRVQKNVTLHGFALNCSNDLAPFEKIVPCGISDAGVTTISRILKRTITPKEILDSVFNSICSALEYINTCRGNV</sequence>
<name>LIPB_TROW8</name>
<accession>Q83I07</accession>
<gene>
    <name evidence="1" type="primary">lipB</name>
    <name type="ordered locus">TW302</name>
</gene>
<organism>
    <name type="scientific">Tropheryma whipplei (strain TW08/27)</name>
    <name type="common">Whipple's bacillus</name>
    <dbReference type="NCBI Taxonomy" id="218496"/>
    <lineage>
        <taxon>Bacteria</taxon>
        <taxon>Bacillati</taxon>
        <taxon>Actinomycetota</taxon>
        <taxon>Actinomycetes</taxon>
        <taxon>Micrococcales</taxon>
        <taxon>Tropherymataceae</taxon>
        <taxon>Tropheryma</taxon>
    </lineage>
</organism>
<reference key="1">
    <citation type="journal article" date="2003" name="Lancet">
        <title>Sequencing and analysis of the genome of the Whipple's disease bacterium Tropheryma whipplei.</title>
        <authorList>
            <person name="Bentley S.D."/>
            <person name="Maiwald M."/>
            <person name="Murphy L.D."/>
            <person name="Pallen M.J."/>
            <person name="Yeats C.A."/>
            <person name="Dover L.G."/>
            <person name="Norbertczak H.T."/>
            <person name="Besra G.S."/>
            <person name="Quail M.A."/>
            <person name="Harris D.E."/>
            <person name="von Herbay A."/>
            <person name="Goble A."/>
            <person name="Rutter S."/>
            <person name="Squares R."/>
            <person name="Squares S."/>
            <person name="Barrell B.G."/>
            <person name="Parkhill J."/>
            <person name="Relman D.A."/>
        </authorList>
    </citation>
    <scope>NUCLEOTIDE SEQUENCE [LARGE SCALE GENOMIC DNA]</scope>
    <source>
        <strain>TW08/27</strain>
    </source>
</reference>
<comment type="function">
    <text evidence="1">Catalyzes the transfer of endogenously produced octanoic acid from octanoyl-acyl-carrier-protein onto the lipoyl domains of lipoate-dependent enzymes. Lipoyl-ACP can also act as a substrate although octanoyl-ACP is likely to be the physiological substrate.</text>
</comment>
<comment type="catalytic activity">
    <reaction evidence="1">
        <text>octanoyl-[ACP] + L-lysyl-[protein] = N(6)-octanoyl-L-lysyl-[protein] + holo-[ACP] + H(+)</text>
        <dbReference type="Rhea" id="RHEA:17665"/>
        <dbReference type="Rhea" id="RHEA-COMP:9636"/>
        <dbReference type="Rhea" id="RHEA-COMP:9685"/>
        <dbReference type="Rhea" id="RHEA-COMP:9752"/>
        <dbReference type="Rhea" id="RHEA-COMP:9928"/>
        <dbReference type="ChEBI" id="CHEBI:15378"/>
        <dbReference type="ChEBI" id="CHEBI:29969"/>
        <dbReference type="ChEBI" id="CHEBI:64479"/>
        <dbReference type="ChEBI" id="CHEBI:78463"/>
        <dbReference type="ChEBI" id="CHEBI:78809"/>
        <dbReference type="EC" id="2.3.1.181"/>
    </reaction>
</comment>
<comment type="pathway">
    <text evidence="1">Protein modification; protein lipoylation via endogenous pathway; protein N(6)-(lipoyl)lysine from octanoyl-[acyl-carrier-protein]: step 1/2.</text>
</comment>
<comment type="subcellular location">
    <subcellularLocation>
        <location evidence="1">Cytoplasm</location>
    </subcellularLocation>
</comment>
<comment type="miscellaneous">
    <text evidence="1">In the reaction, the free carboxyl group of octanoic acid is attached via an amide linkage to the epsilon-amino group of a specific lysine residue of lipoyl domains of lipoate-dependent enzymes.</text>
</comment>
<comment type="similarity">
    <text evidence="1">Belongs to the LipB family.</text>
</comment>
<feature type="chain" id="PRO_0000062887" description="Octanoyltransferase">
    <location>
        <begin position="1"/>
        <end position="225"/>
    </location>
</feature>
<feature type="domain" description="BPL/LPL catalytic" evidence="2">
    <location>
        <begin position="42"/>
        <end position="219"/>
    </location>
</feature>
<feature type="active site" description="Acyl-thioester intermediate" evidence="1">
    <location>
        <position position="180"/>
    </location>
</feature>
<feature type="binding site" evidence="1">
    <location>
        <begin position="79"/>
        <end position="86"/>
    </location>
    <ligand>
        <name>substrate</name>
    </ligand>
</feature>
<feature type="binding site" evidence="1">
    <location>
        <begin position="149"/>
        <end position="151"/>
    </location>
    <ligand>
        <name>substrate</name>
    </ligand>
</feature>
<feature type="binding site" evidence="1">
    <location>
        <begin position="162"/>
        <end position="164"/>
    </location>
    <ligand>
        <name>substrate</name>
    </ligand>
</feature>
<feature type="site" description="Lowers pKa of active site Cys" evidence="1">
    <location>
        <position position="146"/>
    </location>
</feature>